<sequence length="91" mass="10579">MSITTERKQQLIKEYAITENDTGSSAVQCAILTERINNLTEHFKSNHKDHASRRGLLILVGRRRRLLNYIKKNNISEYLELISKLGIRKVK</sequence>
<comment type="function">
    <text evidence="1">One of the primary rRNA binding proteins, it binds directly to 16S rRNA where it helps nucleate assembly of the platform of the 30S subunit by binding and bridging several RNA helices of the 16S rRNA.</text>
</comment>
<comment type="function">
    <text evidence="1">Forms an intersubunit bridge (bridge B4) with the 23S rRNA of the 50S subunit in the ribosome.</text>
</comment>
<comment type="subunit">
    <text evidence="1">Part of the 30S ribosomal subunit. Forms a bridge to the 50S subunit in the 70S ribosome, contacting the 23S rRNA.</text>
</comment>
<comment type="similarity">
    <text evidence="1">Belongs to the universal ribosomal protein uS15 family.</text>
</comment>
<protein>
    <recommendedName>
        <fullName evidence="1">Small ribosomal subunit protein uS15</fullName>
    </recommendedName>
    <alternativeName>
        <fullName evidence="2">30S ribosomal protein S15</fullName>
    </alternativeName>
</protein>
<proteinExistence type="inferred from homology"/>
<organism>
    <name type="scientific">Rickettsia canadensis (strain McKiel)</name>
    <dbReference type="NCBI Taxonomy" id="293613"/>
    <lineage>
        <taxon>Bacteria</taxon>
        <taxon>Pseudomonadati</taxon>
        <taxon>Pseudomonadota</taxon>
        <taxon>Alphaproteobacteria</taxon>
        <taxon>Rickettsiales</taxon>
        <taxon>Rickettsiaceae</taxon>
        <taxon>Rickettsieae</taxon>
        <taxon>Rickettsia</taxon>
        <taxon>belli group</taxon>
    </lineage>
</organism>
<reference key="1">
    <citation type="submission" date="2007-09" db="EMBL/GenBank/DDBJ databases">
        <title>Complete genome sequence of Rickettsia canadensis.</title>
        <authorList>
            <person name="Madan A."/>
            <person name="Fahey J."/>
            <person name="Helton E."/>
            <person name="Ketteman M."/>
            <person name="Madan A."/>
            <person name="Rodrigues S."/>
            <person name="Sanchez A."/>
            <person name="Whiting M."/>
            <person name="Dasch G."/>
            <person name="Eremeeva M."/>
        </authorList>
    </citation>
    <scope>NUCLEOTIDE SEQUENCE [LARGE SCALE GENOMIC DNA]</scope>
    <source>
        <strain>McKiel</strain>
    </source>
</reference>
<name>RS15_RICCK</name>
<accession>A8EYU1</accession>
<feature type="chain" id="PRO_1000054860" description="Small ribosomal subunit protein uS15">
    <location>
        <begin position="1"/>
        <end position="91"/>
    </location>
</feature>
<evidence type="ECO:0000255" key="1">
    <source>
        <dbReference type="HAMAP-Rule" id="MF_01343"/>
    </source>
</evidence>
<evidence type="ECO:0000305" key="2"/>
<dbReference type="EMBL" id="CP000409">
    <property type="protein sequence ID" value="ABV73524.1"/>
    <property type="molecule type" value="Genomic_DNA"/>
</dbReference>
<dbReference type="RefSeq" id="WP_012148721.1">
    <property type="nucleotide sequence ID" value="NC_009879.1"/>
</dbReference>
<dbReference type="SMR" id="A8EYU1"/>
<dbReference type="STRING" id="293613.A1E_02920"/>
<dbReference type="KEGG" id="rcm:A1E_02920"/>
<dbReference type="eggNOG" id="COG0184">
    <property type="taxonomic scope" value="Bacteria"/>
</dbReference>
<dbReference type="HOGENOM" id="CLU_148518_0_0_5"/>
<dbReference type="Proteomes" id="UP000007056">
    <property type="component" value="Chromosome"/>
</dbReference>
<dbReference type="GO" id="GO:0022627">
    <property type="term" value="C:cytosolic small ribosomal subunit"/>
    <property type="evidence" value="ECO:0007669"/>
    <property type="project" value="TreeGrafter"/>
</dbReference>
<dbReference type="GO" id="GO:0019843">
    <property type="term" value="F:rRNA binding"/>
    <property type="evidence" value="ECO:0007669"/>
    <property type="project" value="UniProtKB-UniRule"/>
</dbReference>
<dbReference type="GO" id="GO:0003735">
    <property type="term" value="F:structural constituent of ribosome"/>
    <property type="evidence" value="ECO:0007669"/>
    <property type="project" value="InterPro"/>
</dbReference>
<dbReference type="GO" id="GO:0006412">
    <property type="term" value="P:translation"/>
    <property type="evidence" value="ECO:0007669"/>
    <property type="project" value="UniProtKB-UniRule"/>
</dbReference>
<dbReference type="CDD" id="cd00353">
    <property type="entry name" value="Ribosomal_S15p_S13e"/>
    <property type="match status" value="1"/>
</dbReference>
<dbReference type="FunFam" id="1.10.287.10:FF:000002">
    <property type="entry name" value="30S ribosomal protein S15"/>
    <property type="match status" value="1"/>
</dbReference>
<dbReference type="Gene3D" id="6.10.250.3130">
    <property type="match status" value="1"/>
</dbReference>
<dbReference type="Gene3D" id="1.10.287.10">
    <property type="entry name" value="S15/NS1, RNA-binding"/>
    <property type="match status" value="1"/>
</dbReference>
<dbReference type="HAMAP" id="MF_01343_B">
    <property type="entry name" value="Ribosomal_uS15_B"/>
    <property type="match status" value="1"/>
</dbReference>
<dbReference type="InterPro" id="IPR000589">
    <property type="entry name" value="Ribosomal_uS15"/>
</dbReference>
<dbReference type="InterPro" id="IPR005290">
    <property type="entry name" value="Ribosomal_uS15_bac-type"/>
</dbReference>
<dbReference type="InterPro" id="IPR009068">
    <property type="entry name" value="uS15_NS1_RNA-bd_sf"/>
</dbReference>
<dbReference type="NCBIfam" id="TIGR00952">
    <property type="entry name" value="S15_bact"/>
    <property type="match status" value="1"/>
</dbReference>
<dbReference type="PANTHER" id="PTHR23321">
    <property type="entry name" value="RIBOSOMAL PROTEIN S15, BACTERIAL AND ORGANELLAR"/>
    <property type="match status" value="1"/>
</dbReference>
<dbReference type="PANTHER" id="PTHR23321:SF26">
    <property type="entry name" value="SMALL RIBOSOMAL SUBUNIT PROTEIN US15M"/>
    <property type="match status" value="1"/>
</dbReference>
<dbReference type="Pfam" id="PF00312">
    <property type="entry name" value="Ribosomal_S15"/>
    <property type="match status" value="1"/>
</dbReference>
<dbReference type="SMART" id="SM01387">
    <property type="entry name" value="Ribosomal_S15"/>
    <property type="match status" value="1"/>
</dbReference>
<dbReference type="SUPFAM" id="SSF47060">
    <property type="entry name" value="S15/NS1 RNA-binding domain"/>
    <property type="match status" value="1"/>
</dbReference>
<dbReference type="PROSITE" id="PS00362">
    <property type="entry name" value="RIBOSOMAL_S15"/>
    <property type="match status" value="1"/>
</dbReference>
<gene>
    <name evidence="1" type="primary">rpsO</name>
    <name type="ordered locus">A1E_02920</name>
</gene>
<keyword id="KW-0687">Ribonucleoprotein</keyword>
<keyword id="KW-0689">Ribosomal protein</keyword>
<keyword id="KW-0694">RNA-binding</keyword>
<keyword id="KW-0699">rRNA-binding</keyword>